<evidence type="ECO:0000255" key="1">
    <source>
        <dbReference type="HAMAP-Rule" id="MF_01569"/>
    </source>
</evidence>
<gene>
    <name evidence="1" type="primary">proS</name>
    <name type="ordered locus">CV_0574</name>
</gene>
<accession>Q7P0J3</accession>
<protein>
    <recommendedName>
        <fullName evidence="1">Proline--tRNA ligase</fullName>
        <ecNumber evidence="1">6.1.1.15</ecNumber>
    </recommendedName>
    <alternativeName>
        <fullName evidence="1">Prolyl-tRNA synthetase</fullName>
        <shortName evidence="1">ProRS</shortName>
    </alternativeName>
</protein>
<dbReference type="EC" id="6.1.1.15" evidence="1"/>
<dbReference type="EMBL" id="AE016825">
    <property type="protein sequence ID" value="AAQ58250.1"/>
    <property type="molecule type" value="Genomic_DNA"/>
</dbReference>
<dbReference type="RefSeq" id="WP_011134129.1">
    <property type="nucleotide sequence ID" value="NC_005085.1"/>
</dbReference>
<dbReference type="SMR" id="Q7P0J3"/>
<dbReference type="STRING" id="243365.CV_0574"/>
<dbReference type="GeneID" id="66365521"/>
<dbReference type="KEGG" id="cvi:CV_0574"/>
<dbReference type="eggNOG" id="COG0442">
    <property type="taxonomic scope" value="Bacteria"/>
</dbReference>
<dbReference type="HOGENOM" id="CLU_016739_0_0_4"/>
<dbReference type="OrthoDB" id="9809052at2"/>
<dbReference type="Proteomes" id="UP000001424">
    <property type="component" value="Chromosome"/>
</dbReference>
<dbReference type="GO" id="GO:0005829">
    <property type="term" value="C:cytosol"/>
    <property type="evidence" value="ECO:0007669"/>
    <property type="project" value="TreeGrafter"/>
</dbReference>
<dbReference type="GO" id="GO:0002161">
    <property type="term" value="F:aminoacyl-tRNA deacylase activity"/>
    <property type="evidence" value="ECO:0007669"/>
    <property type="project" value="InterPro"/>
</dbReference>
<dbReference type="GO" id="GO:0005524">
    <property type="term" value="F:ATP binding"/>
    <property type="evidence" value="ECO:0007669"/>
    <property type="project" value="UniProtKB-UniRule"/>
</dbReference>
<dbReference type="GO" id="GO:0004827">
    <property type="term" value="F:proline-tRNA ligase activity"/>
    <property type="evidence" value="ECO:0007669"/>
    <property type="project" value="UniProtKB-UniRule"/>
</dbReference>
<dbReference type="GO" id="GO:0006433">
    <property type="term" value="P:prolyl-tRNA aminoacylation"/>
    <property type="evidence" value="ECO:0007669"/>
    <property type="project" value="UniProtKB-UniRule"/>
</dbReference>
<dbReference type="CDD" id="cd04334">
    <property type="entry name" value="ProRS-INS"/>
    <property type="match status" value="1"/>
</dbReference>
<dbReference type="CDD" id="cd00861">
    <property type="entry name" value="ProRS_anticodon_short"/>
    <property type="match status" value="1"/>
</dbReference>
<dbReference type="CDD" id="cd00779">
    <property type="entry name" value="ProRS_core_prok"/>
    <property type="match status" value="1"/>
</dbReference>
<dbReference type="FunFam" id="3.30.930.10:FF:000043">
    <property type="entry name" value="Proline--tRNA ligase"/>
    <property type="match status" value="1"/>
</dbReference>
<dbReference type="FunFam" id="3.30.930.10:FF:000097">
    <property type="entry name" value="Proline--tRNA ligase"/>
    <property type="match status" value="1"/>
</dbReference>
<dbReference type="Gene3D" id="3.40.50.800">
    <property type="entry name" value="Anticodon-binding domain"/>
    <property type="match status" value="1"/>
</dbReference>
<dbReference type="Gene3D" id="3.30.930.10">
    <property type="entry name" value="Bira Bifunctional Protein, Domain 2"/>
    <property type="match status" value="2"/>
</dbReference>
<dbReference type="Gene3D" id="3.90.960.10">
    <property type="entry name" value="YbaK/aminoacyl-tRNA synthetase-associated domain"/>
    <property type="match status" value="1"/>
</dbReference>
<dbReference type="HAMAP" id="MF_01569">
    <property type="entry name" value="Pro_tRNA_synth_type1"/>
    <property type="match status" value="1"/>
</dbReference>
<dbReference type="InterPro" id="IPR002314">
    <property type="entry name" value="aa-tRNA-synt_IIb"/>
</dbReference>
<dbReference type="InterPro" id="IPR006195">
    <property type="entry name" value="aa-tRNA-synth_II"/>
</dbReference>
<dbReference type="InterPro" id="IPR045864">
    <property type="entry name" value="aa-tRNA-synth_II/BPL/LPL"/>
</dbReference>
<dbReference type="InterPro" id="IPR004154">
    <property type="entry name" value="Anticodon-bd"/>
</dbReference>
<dbReference type="InterPro" id="IPR036621">
    <property type="entry name" value="Anticodon-bd_dom_sf"/>
</dbReference>
<dbReference type="InterPro" id="IPR002316">
    <property type="entry name" value="Pro-tRNA-ligase_IIa"/>
</dbReference>
<dbReference type="InterPro" id="IPR004500">
    <property type="entry name" value="Pro-tRNA-synth_IIa_bac-type"/>
</dbReference>
<dbReference type="InterPro" id="IPR023717">
    <property type="entry name" value="Pro-tRNA-Synthase_IIa_type1"/>
</dbReference>
<dbReference type="InterPro" id="IPR050062">
    <property type="entry name" value="Pro-tRNA_synthetase"/>
</dbReference>
<dbReference type="InterPro" id="IPR044140">
    <property type="entry name" value="ProRS_anticodon_short"/>
</dbReference>
<dbReference type="InterPro" id="IPR033730">
    <property type="entry name" value="ProRS_core_prok"/>
</dbReference>
<dbReference type="InterPro" id="IPR036754">
    <property type="entry name" value="YbaK/aa-tRNA-synt-asso_dom_sf"/>
</dbReference>
<dbReference type="InterPro" id="IPR007214">
    <property type="entry name" value="YbaK/aa-tRNA-synth-assoc-dom"/>
</dbReference>
<dbReference type="NCBIfam" id="NF006625">
    <property type="entry name" value="PRK09194.1"/>
    <property type="match status" value="1"/>
</dbReference>
<dbReference type="NCBIfam" id="TIGR00409">
    <property type="entry name" value="proS_fam_II"/>
    <property type="match status" value="1"/>
</dbReference>
<dbReference type="PANTHER" id="PTHR42753">
    <property type="entry name" value="MITOCHONDRIAL RIBOSOME PROTEIN L39/PROLYL-TRNA LIGASE FAMILY MEMBER"/>
    <property type="match status" value="1"/>
</dbReference>
<dbReference type="PANTHER" id="PTHR42753:SF2">
    <property type="entry name" value="PROLINE--TRNA LIGASE"/>
    <property type="match status" value="1"/>
</dbReference>
<dbReference type="Pfam" id="PF03129">
    <property type="entry name" value="HGTP_anticodon"/>
    <property type="match status" value="1"/>
</dbReference>
<dbReference type="Pfam" id="PF00587">
    <property type="entry name" value="tRNA-synt_2b"/>
    <property type="match status" value="1"/>
</dbReference>
<dbReference type="Pfam" id="PF04073">
    <property type="entry name" value="tRNA_edit"/>
    <property type="match status" value="1"/>
</dbReference>
<dbReference type="PIRSF" id="PIRSF001535">
    <property type="entry name" value="ProRS_1"/>
    <property type="match status" value="1"/>
</dbReference>
<dbReference type="PRINTS" id="PR01046">
    <property type="entry name" value="TRNASYNTHPRO"/>
</dbReference>
<dbReference type="SUPFAM" id="SSF52954">
    <property type="entry name" value="Class II aaRS ABD-related"/>
    <property type="match status" value="1"/>
</dbReference>
<dbReference type="SUPFAM" id="SSF55681">
    <property type="entry name" value="Class II aaRS and biotin synthetases"/>
    <property type="match status" value="1"/>
</dbReference>
<dbReference type="SUPFAM" id="SSF55826">
    <property type="entry name" value="YbaK/ProRS associated domain"/>
    <property type="match status" value="1"/>
</dbReference>
<dbReference type="PROSITE" id="PS50862">
    <property type="entry name" value="AA_TRNA_LIGASE_II"/>
    <property type="match status" value="1"/>
</dbReference>
<proteinExistence type="inferred from homology"/>
<name>SYP_CHRVO</name>
<comment type="function">
    <text evidence="1">Catalyzes the attachment of proline to tRNA(Pro) in a two-step reaction: proline is first activated by ATP to form Pro-AMP and then transferred to the acceptor end of tRNA(Pro). As ProRS can inadvertently accommodate and process non-cognate amino acids such as alanine and cysteine, to avoid such errors it has two additional distinct editing activities against alanine. One activity is designated as 'pretransfer' editing and involves the tRNA(Pro)-independent hydrolysis of activated Ala-AMP. The other activity is designated 'posttransfer' editing and involves deacylation of mischarged Ala-tRNA(Pro). The misacylated Cys-tRNA(Pro) is not edited by ProRS.</text>
</comment>
<comment type="catalytic activity">
    <reaction evidence="1">
        <text>tRNA(Pro) + L-proline + ATP = L-prolyl-tRNA(Pro) + AMP + diphosphate</text>
        <dbReference type="Rhea" id="RHEA:14305"/>
        <dbReference type="Rhea" id="RHEA-COMP:9700"/>
        <dbReference type="Rhea" id="RHEA-COMP:9702"/>
        <dbReference type="ChEBI" id="CHEBI:30616"/>
        <dbReference type="ChEBI" id="CHEBI:33019"/>
        <dbReference type="ChEBI" id="CHEBI:60039"/>
        <dbReference type="ChEBI" id="CHEBI:78442"/>
        <dbReference type="ChEBI" id="CHEBI:78532"/>
        <dbReference type="ChEBI" id="CHEBI:456215"/>
        <dbReference type="EC" id="6.1.1.15"/>
    </reaction>
</comment>
<comment type="subunit">
    <text evidence="1">Homodimer.</text>
</comment>
<comment type="subcellular location">
    <subcellularLocation>
        <location evidence="1">Cytoplasm</location>
    </subcellularLocation>
</comment>
<comment type="domain">
    <text evidence="1">Consists of three domains: the N-terminal catalytic domain, the editing domain and the C-terminal anticodon-binding domain.</text>
</comment>
<comment type="similarity">
    <text evidence="1">Belongs to the class-II aminoacyl-tRNA synthetase family. ProS type 1 subfamily.</text>
</comment>
<organism>
    <name type="scientific">Chromobacterium violaceum (strain ATCC 12472 / DSM 30191 / JCM 1249 / CCUG 213 / NBRC 12614 / NCIMB 9131 / NCTC 9757 / MK)</name>
    <dbReference type="NCBI Taxonomy" id="243365"/>
    <lineage>
        <taxon>Bacteria</taxon>
        <taxon>Pseudomonadati</taxon>
        <taxon>Pseudomonadota</taxon>
        <taxon>Betaproteobacteria</taxon>
        <taxon>Neisseriales</taxon>
        <taxon>Chromobacteriaceae</taxon>
        <taxon>Chromobacterium</taxon>
    </lineage>
</organism>
<keyword id="KW-0030">Aminoacyl-tRNA synthetase</keyword>
<keyword id="KW-0067">ATP-binding</keyword>
<keyword id="KW-0963">Cytoplasm</keyword>
<keyword id="KW-0436">Ligase</keyword>
<keyword id="KW-0547">Nucleotide-binding</keyword>
<keyword id="KW-0648">Protein biosynthesis</keyword>
<keyword id="KW-1185">Reference proteome</keyword>
<reference key="1">
    <citation type="journal article" date="2003" name="Proc. Natl. Acad. Sci. U.S.A.">
        <title>The complete genome sequence of Chromobacterium violaceum reveals remarkable and exploitable bacterial adaptability.</title>
        <authorList>
            <person name="Vasconcelos A.T.R."/>
            <person name="de Almeida D.F."/>
            <person name="Hungria M."/>
            <person name="Guimaraes C.T."/>
            <person name="Antonio R.V."/>
            <person name="Almeida F.C."/>
            <person name="de Almeida L.G.P."/>
            <person name="de Almeida R."/>
            <person name="Alves-Gomes J.A."/>
            <person name="Andrade E.M."/>
            <person name="Araripe J."/>
            <person name="de Araujo M.F.F."/>
            <person name="Astolfi-Filho S."/>
            <person name="Azevedo V."/>
            <person name="Baptista A.J."/>
            <person name="Bataus L.A.M."/>
            <person name="Batista J.S."/>
            <person name="Belo A."/>
            <person name="van den Berg C."/>
            <person name="Bogo M."/>
            <person name="Bonatto S."/>
            <person name="Bordignon J."/>
            <person name="Brigido M.M."/>
            <person name="Brito C.A."/>
            <person name="Brocchi M."/>
            <person name="Burity H.A."/>
            <person name="Camargo A.A."/>
            <person name="Cardoso D.D.P."/>
            <person name="Carneiro N.P."/>
            <person name="Carraro D.M."/>
            <person name="Carvalho C.M.B."/>
            <person name="Cascardo J.C.M."/>
            <person name="Cavada B.S."/>
            <person name="Chueire L.M.O."/>
            <person name="Creczynski-Pasa T.B."/>
            <person name="Cunha-Junior N.C."/>
            <person name="Fagundes N."/>
            <person name="Falcao C.L."/>
            <person name="Fantinatti F."/>
            <person name="Farias I.P."/>
            <person name="Felipe M.S.S."/>
            <person name="Ferrari L.P."/>
            <person name="Ferro J.A."/>
            <person name="Ferro M.I.T."/>
            <person name="Franco G.R."/>
            <person name="Freitas N.S.A."/>
            <person name="Furlan L.R."/>
            <person name="Gazzinelli R.T."/>
            <person name="Gomes E.A."/>
            <person name="Goncalves P.R."/>
            <person name="Grangeiro T.B."/>
            <person name="Grattapaglia D."/>
            <person name="Grisard E.C."/>
            <person name="Hanna E.S."/>
            <person name="Jardim S.N."/>
            <person name="Laurino J."/>
            <person name="Leoi L.C.T."/>
            <person name="Lima L.F.A."/>
            <person name="Loureiro M.F."/>
            <person name="Lyra M.C.C.P."/>
            <person name="Madeira H.M.F."/>
            <person name="Manfio G.P."/>
            <person name="Maranhao A.Q."/>
            <person name="Martins W.S."/>
            <person name="di Mauro S.M.Z."/>
            <person name="de Medeiros S.R.B."/>
            <person name="Meissner R.V."/>
            <person name="Moreira M.A.M."/>
            <person name="Nascimento F.F."/>
            <person name="Nicolas M.F."/>
            <person name="Oliveira J.G."/>
            <person name="Oliveira S.C."/>
            <person name="Paixao R.F.C."/>
            <person name="Parente J.A."/>
            <person name="Pedrosa F.O."/>
            <person name="Pena S.D.J."/>
            <person name="Pereira J.O."/>
            <person name="Pereira M."/>
            <person name="Pinto L.S.R.C."/>
            <person name="Pinto L.S."/>
            <person name="Porto J.I.R."/>
            <person name="Potrich D.P."/>
            <person name="Ramalho-Neto C.E."/>
            <person name="Reis A.M.M."/>
            <person name="Rigo L.U."/>
            <person name="Rondinelli E."/>
            <person name="Santos E.B.P."/>
            <person name="Santos F.R."/>
            <person name="Schneider M.P.C."/>
            <person name="Seuanez H.N."/>
            <person name="Silva A.M.R."/>
            <person name="da Silva A.L.C."/>
            <person name="Silva D.W."/>
            <person name="Silva R."/>
            <person name="Simoes I.C."/>
            <person name="Simon D."/>
            <person name="Soares C.M.A."/>
            <person name="Soares R.B.A."/>
            <person name="Souza E.M."/>
            <person name="Souza K.R.L."/>
            <person name="Souza R.C."/>
            <person name="Steffens M.B.R."/>
            <person name="Steindel M."/>
            <person name="Teixeira S.R."/>
            <person name="Urmenyi T."/>
            <person name="Vettore A."/>
            <person name="Wassem R."/>
            <person name="Zaha A."/>
            <person name="Simpson A.J.G."/>
        </authorList>
    </citation>
    <scope>NUCLEOTIDE SEQUENCE [LARGE SCALE GENOMIC DNA]</scope>
    <source>
        <strain>ATCC 12472 / DSM 30191 / JCM 1249 / CCUG 213 / NBRC 12614 / NCIMB 9131 / NCTC 9757 / MK</strain>
    </source>
</reference>
<feature type="chain" id="PRO_0000248670" description="Proline--tRNA ligase">
    <location>
        <begin position="1"/>
        <end position="568"/>
    </location>
</feature>
<sequence length="568" mass="62537">MRASQFFISTLKEAPADADITSQKLMIRAGFIRKQAAGIYSWMPMGLRVVRKVETIIREEMNRAGGIEVSLPVVQPAELWQETGRWDAMGAELLRFKDRHERDFALQPTAEEVITDIARRELRSYRALPKNFYQIQTKFRDERRPRFGVMRGREFTMKDAYSFDRSAEDAGKSYDNMYAAYRRIFDRLGLTYRAVAADTGAIGGDRSHEFQVIADTGEDAIVYCPTSEYAANIELAEAVAPAGERPAASAALAKVHTPKVKTIAELVDFLKIDIKQTVKAVVVEGEQDEAVLMLVRGDHELNEVKAQKVAGIKNPLAFASPAAIRDAFGANPGSLGPVGFKGRVIADRTVAKMADFVIGANEDDQHYTGANFGRDCAEPEVFDIRNVVEGDPSPDGQGALAIQRGIEVGHVFYLGTKYSAAMNATFLDEDGKPKPFEMGCYGIGVTRILGAAIEQNYDDKGMIWPDSIAPFAVVVCPVGYDRSEAVKEAADKLYADLQARGVDVMLDDRGERPGAMFADWELIGAPHRVTIGDRGLKEGKVEYQHRRDSEATAVAADAILEHVLSKLA</sequence>